<evidence type="ECO:0000250" key="1"/>
<evidence type="ECO:0000255" key="2">
    <source>
        <dbReference type="PROSITE-ProRule" id="PRU00159"/>
    </source>
</evidence>
<evidence type="ECO:0000255" key="3">
    <source>
        <dbReference type="PROSITE-ProRule" id="PRU10027"/>
    </source>
</evidence>
<evidence type="ECO:0000256" key="4">
    <source>
        <dbReference type="SAM" id="MobiDB-lite"/>
    </source>
</evidence>
<evidence type="ECO:0000305" key="5"/>
<keyword id="KW-0067">ATP-binding</keyword>
<keyword id="KW-0418">Kinase</keyword>
<keyword id="KW-0547">Nucleotide-binding</keyword>
<keyword id="KW-0597">Phosphoprotein</keyword>
<keyword id="KW-1185">Reference proteome</keyword>
<keyword id="KW-0723">Serine/threonine-protein kinase</keyword>
<keyword id="KW-0808">Transferase</keyword>
<accession>Q40518</accession>
<organism>
    <name type="scientific">Nicotiana tabacum</name>
    <name type="common">Common tobacco</name>
    <dbReference type="NCBI Taxonomy" id="4097"/>
    <lineage>
        <taxon>Eukaryota</taxon>
        <taxon>Viridiplantae</taxon>
        <taxon>Streptophyta</taxon>
        <taxon>Embryophyta</taxon>
        <taxon>Tracheophyta</taxon>
        <taxon>Spermatophyta</taxon>
        <taxon>Magnoliopsida</taxon>
        <taxon>eudicotyledons</taxon>
        <taxon>Gunneridae</taxon>
        <taxon>Pentapetalae</taxon>
        <taxon>asterids</taxon>
        <taxon>lamiids</taxon>
        <taxon>Solanales</taxon>
        <taxon>Solanaceae</taxon>
        <taxon>Nicotianoideae</taxon>
        <taxon>Nicotianeae</taxon>
        <taxon>Nicotiana</taxon>
    </lineage>
</organism>
<protein>
    <recommendedName>
        <fullName>Shaggy-related protein kinase NtK-1</fullName>
        <ecNumber>2.7.11.1</ecNumber>
    </recommendedName>
</protein>
<gene>
    <name type="primary">NTK-1</name>
</gene>
<proteinExistence type="evidence at transcript level"/>
<feature type="chain" id="PRO_0000086403" description="Shaggy-related protein kinase NtK-1">
    <location>
        <begin position="1"/>
        <end position="409"/>
    </location>
</feature>
<feature type="domain" description="Protein kinase" evidence="2">
    <location>
        <begin position="73"/>
        <end position="357"/>
    </location>
</feature>
<feature type="region of interest" description="Disordered" evidence="4">
    <location>
        <begin position="1"/>
        <end position="27"/>
    </location>
</feature>
<feature type="active site" description="Proton acceptor" evidence="2 3">
    <location>
        <position position="198"/>
    </location>
</feature>
<feature type="binding site" evidence="2">
    <location>
        <begin position="79"/>
        <end position="87"/>
    </location>
    <ligand>
        <name>ATP</name>
        <dbReference type="ChEBI" id="CHEBI:30616"/>
    </ligand>
</feature>
<feature type="binding site" evidence="2">
    <location>
        <position position="102"/>
    </location>
    <ligand>
        <name>ATP</name>
        <dbReference type="ChEBI" id="CHEBI:30616"/>
    </ligand>
</feature>
<name>MSK1_TOBAC</name>
<sequence length="409" mass="46309">MTSVGLAPVSGLRESSSHSVGVDRLPEEMNDMRIRDDKEIEAAIVDGNGTETGHIIVTTIGGRHGQPKQTISYMAERIVGQGSFGVVFQAKCLETGETVAIKKVLQDKRYKNRELQTMRLLDHPNVVCLKHCFFSTTEKDEVYLNLVLEYVPETVHRVIKHYNKLNQRMPLILVKLYTYQIFRALSYIHHTIGVCHRDIKPQNLLVNPHTHQVKLCDFGSAKVLVKGEPNISYICSRYYRAPELIFGATEYTTAIDIWSAGCVLAELLLGQPLFPGESGVDQLVEIIKVLGTPTREEIKCMNPNYNEFKFPQIKAHPWHKIFHKRMPPEAVDLVSRLLQYSPNLRCTALEAVTHAFFDELRDPNTRLPNGRVLPPLFNFKAHELKGVSAENLLKLVPEHARKQCPSLGL</sequence>
<comment type="function">
    <text evidence="1">May mediate extracellular signals to regulate transcription in differentiating cells.</text>
</comment>
<comment type="catalytic activity">
    <reaction>
        <text>L-seryl-[protein] + ATP = O-phospho-L-seryl-[protein] + ADP + H(+)</text>
        <dbReference type="Rhea" id="RHEA:17989"/>
        <dbReference type="Rhea" id="RHEA-COMP:9863"/>
        <dbReference type="Rhea" id="RHEA-COMP:11604"/>
        <dbReference type="ChEBI" id="CHEBI:15378"/>
        <dbReference type="ChEBI" id="CHEBI:29999"/>
        <dbReference type="ChEBI" id="CHEBI:30616"/>
        <dbReference type="ChEBI" id="CHEBI:83421"/>
        <dbReference type="ChEBI" id="CHEBI:456216"/>
        <dbReference type="EC" id="2.7.11.1"/>
    </reaction>
</comment>
<comment type="catalytic activity">
    <reaction>
        <text>L-threonyl-[protein] + ATP = O-phospho-L-threonyl-[protein] + ADP + H(+)</text>
        <dbReference type="Rhea" id="RHEA:46608"/>
        <dbReference type="Rhea" id="RHEA-COMP:11060"/>
        <dbReference type="Rhea" id="RHEA-COMP:11605"/>
        <dbReference type="ChEBI" id="CHEBI:15378"/>
        <dbReference type="ChEBI" id="CHEBI:30013"/>
        <dbReference type="ChEBI" id="CHEBI:30616"/>
        <dbReference type="ChEBI" id="CHEBI:61977"/>
        <dbReference type="ChEBI" id="CHEBI:456216"/>
        <dbReference type="EC" id="2.7.11.1"/>
    </reaction>
</comment>
<comment type="PTM">
    <text evidence="1">Autophosphorylated mainly on threonine and serine residues.</text>
</comment>
<comment type="similarity">
    <text evidence="5">Belongs to the protein kinase superfamily. CMGC Ser/Thr protein kinase family. GSK-3 subfamily.</text>
</comment>
<reference key="1">
    <citation type="journal article" date="1995" name="Biochim. Biophys. Acta">
        <title>Isolation and expression during pollen development of a tobacco cDNA clone encoding a protein kinase homologous to shaggy/glycogen synthase kinase-3.</title>
        <authorList>
            <person name="Einzenberger E."/>
            <person name="Eller N."/>
            <person name="Heberle-Bors E."/>
            <person name="Vicente O."/>
        </authorList>
    </citation>
    <scope>NUCLEOTIDE SEQUENCE [MRNA]</scope>
</reference>
<dbReference type="EC" id="2.7.11.1"/>
<dbReference type="EMBL" id="X77763">
    <property type="protein sequence ID" value="CAA54803.1"/>
    <property type="molecule type" value="mRNA"/>
</dbReference>
<dbReference type="PIR" id="S52095">
    <property type="entry name" value="S52095"/>
</dbReference>
<dbReference type="RefSeq" id="NP_001312250.1">
    <property type="nucleotide sequence ID" value="NM_001325321.1"/>
</dbReference>
<dbReference type="SMR" id="Q40518"/>
<dbReference type="STRING" id="4097.Q40518"/>
<dbReference type="PaxDb" id="4097-Q40518"/>
<dbReference type="GeneID" id="107781719"/>
<dbReference type="KEGG" id="nta:107781719"/>
<dbReference type="OrthoDB" id="272141at2759"/>
<dbReference type="BRENDA" id="2.7.11.26">
    <property type="organism ID" value="3645"/>
</dbReference>
<dbReference type="Proteomes" id="UP000084051">
    <property type="component" value="Unplaced"/>
</dbReference>
<dbReference type="GO" id="GO:0005737">
    <property type="term" value="C:cytoplasm"/>
    <property type="evidence" value="ECO:0000318"/>
    <property type="project" value="GO_Central"/>
</dbReference>
<dbReference type="GO" id="GO:0005634">
    <property type="term" value="C:nucleus"/>
    <property type="evidence" value="ECO:0000318"/>
    <property type="project" value="GO_Central"/>
</dbReference>
<dbReference type="GO" id="GO:0005524">
    <property type="term" value="F:ATP binding"/>
    <property type="evidence" value="ECO:0007669"/>
    <property type="project" value="UniProtKB-KW"/>
</dbReference>
<dbReference type="GO" id="GO:0106310">
    <property type="term" value="F:protein serine kinase activity"/>
    <property type="evidence" value="ECO:0007669"/>
    <property type="project" value="RHEA"/>
</dbReference>
<dbReference type="GO" id="GO:0004674">
    <property type="term" value="F:protein serine/threonine kinase activity"/>
    <property type="evidence" value="ECO:0000318"/>
    <property type="project" value="GO_Central"/>
</dbReference>
<dbReference type="GO" id="GO:0030154">
    <property type="term" value="P:cell differentiation"/>
    <property type="evidence" value="ECO:0000318"/>
    <property type="project" value="GO_Central"/>
</dbReference>
<dbReference type="GO" id="GO:0007165">
    <property type="term" value="P:signal transduction"/>
    <property type="evidence" value="ECO:0000318"/>
    <property type="project" value="GO_Central"/>
</dbReference>
<dbReference type="CDD" id="cd14137">
    <property type="entry name" value="STKc_GSK3"/>
    <property type="match status" value="1"/>
</dbReference>
<dbReference type="FunFam" id="3.30.200.20:FF:000009">
    <property type="entry name" value="Glycogen synthase kinase-3 beta"/>
    <property type="match status" value="1"/>
</dbReference>
<dbReference type="FunFam" id="1.10.510.10:FF:000082">
    <property type="entry name" value="Shaggy-related protein kinase kappa"/>
    <property type="match status" value="1"/>
</dbReference>
<dbReference type="Gene3D" id="3.30.200.20">
    <property type="entry name" value="Phosphorylase Kinase, domain 1"/>
    <property type="match status" value="1"/>
</dbReference>
<dbReference type="Gene3D" id="1.10.510.10">
    <property type="entry name" value="Transferase(Phosphotransferase) domain 1"/>
    <property type="match status" value="1"/>
</dbReference>
<dbReference type="InterPro" id="IPR050591">
    <property type="entry name" value="GSK-3"/>
</dbReference>
<dbReference type="InterPro" id="IPR011009">
    <property type="entry name" value="Kinase-like_dom_sf"/>
</dbReference>
<dbReference type="InterPro" id="IPR000719">
    <property type="entry name" value="Prot_kinase_dom"/>
</dbReference>
<dbReference type="InterPro" id="IPR017441">
    <property type="entry name" value="Protein_kinase_ATP_BS"/>
</dbReference>
<dbReference type="InterPro" id="IPR008271">
    <property type="entry name" value="Ser/Thr_kinase_AS"/>
</dbReference>
<dbReference type="InterPro" id="IPR039192">
    <property type="entry name" value="STKc_GSK3"/>
</dbReference>
<dbReference type="PANTHER" id="PTHR24057">
    <property type="entry name" value="GLYCOGEN SYNTHASE KINASE-3 ALPHA"/>
    <property type="match status" value="1"/>
</dbReference>
<dbReference type="PANTHER" id="PTHR24057:SF0">
    <property type="entry name" value="PROTEIN KINASE SHAGGY-RELATED"/>
    <property type="match status" value="1"/>
</dbReference>
<dbReference type="Pfam" id="PF00069">
    <property type="entry name" value="Pkinase"/>
    <property type="match status" value="1"/>
</dbReference>
<dbReference type="SMART" id="SM00220">
    <property type="entry name" value="S_TKc"/>
    <property type="match status" value="1"/>
</dbReference>
<dbReference type="SUPFAM" id="SSF56112">
    <property type="entry name" value="Protein kinase-like (PK-like)"/>
    <property type="match status" value="1"/>
</dbReference>
<dbReference type="PROSITE" id="PS00107">
    <property type="entry name" value="PROTEIN_KINASE_ATP"/>
    <property type="match status" value="1"/>
</dbReference>
<dbReference type="PROSITE" id="PS50011">
    <property type="entry name" value="PROTEIN_KINASE_DOM"/>
    <property type="match status" value="1"/>
</dbReference>
<dbReference type="PROSITE" id="PS00108">
    <property type="entry name" value="PROTEIN_KINASE_ST"/>
    <property type="match status" value="1"/>
</dbReference>